<proteinExistence type="evidence at protein level"/>
<accession>O18191</accession>
<evidence type="ECO:0000250" key="1">
    <source>
        <dbReference type="UniProtKB" id="Q9H1A4"/>
    </source>
</evidence>
<evidence type="ECO:0000269" key="2">
    <source>
    </source>
</evidence>
<evidence type="ECO:0000269" key="3">
    <source>
    </source>
</evidence>
<evidence type="ECO:0000269" key="4">
    <source>
    </source>
</evidence>
<evidence type="ECO:0000269" key="5">
    <source>
    </source>
</evidence>
<evidence type="ECO:0000269" key="6">
    <source>
    </source>
</evidence>
<evidence type="ECO:0000305" key="7"/>
<evidence type="ECO:0000312" key="8">
    <source>
        <dbReference type="Proteomes" id="UP000001940"/>
    </source>
</evidence>
<evidence type="ECO:0000312" key="9">
    <source>
        <dbReference type="WormBase" id="W10C6.1"/>
    </source>
</evidence>
<protein>
    <recommendedName>
        <fullName evidence="1">Anaphase-promoting complex subunit 1</fullName>
        <shortName evidence="1">APC1</shortName>
    </recommendedName>
    <alternativeName>
        <fullName evidence="9">Metaphase-to-anaphase transition protein 2</fullName>
    </alternativeName>
</protein>
<keyword id="KW-0131">Cell cycle</keyword>
<keyword id="KW-0132">Cell division</keyword>
<keyword id="KW-0217">Developmental protein</keyword>
<keyword id="KW-0469">Meiosis</keyword>
<keyword id="KW-0498">Mitosis</keyword>
<keyword id="KW-0532">Neurotransmitter transport</keyword>
<keyword id="KW-1185">Reference proteome</keyword>
<keyword id="KW-0813">Transport</keyword>
<keyword id="KW-0833">Ubl conjugation pathway</keyword>
<organism evidence="8">
    <name type="scientific">Caenorhabditis elegans</name>
    <dbReference type="NCBI Taxonomy" id="6239"/>
    <lineage>
        <taxon>Eukaryota</taxon>
        <taxon>Metazoa</taxon>
        <taxon>Ecdysozoa</taxon>
        <taxon>Nematoda</taxon>
        <taxon>Chromadorea</taxon>
        <taxon>Rhabditida</taxon>
        <taxon>Rhabditina</taxon>
        <taxon>Rhabditomorpha</taxon>
        <taxon>Rhabditoidea</taxon>
        <taxon>Rhabditidae</taxon>
        <taxon>Peloderinae</taxon>
        <taxon>Caenorhabditis</taxon>
    </lineage>
</organism>
<name>APC1_CAEEL</name>
<reference evidence="8" key="1">
    <citation type="journal article" date="1998" name="Science">
        <title>Genome sequence of the nematode C. elegans: a platform for investigating biology.</title>
        <authorList>
            <consortium name="The C. elegans sequencing consortium"/>
        </authorList>
    </citation>
    <scope>NUCLEOTIDE SEQUENCE [LARGE SCALE GENOMIC DNA]</scope>
    <source>
        <strain evidence="8">Bristol N2</strain>
    </source>
</reference>
<reference evidence="7" key="2">
    <citation type="journal article" date="2000" name="J. Cell Biol.">
        <title>Metaphase to anaphase (mat) transition-defective mutants in Caenorhabditis elegans.</title>
        <authorList>
            <person name="Golden A."/>
            <person name="Sadler P.L."/>
            <person name="Wallenfang M.R."/>
            <person name="Schumacher J.M."/>
            <person name="Hamill D.R."/>
            <person name="Bates G."/>
            <person name="Bowerman B."/>
            <person name="Seydoux G."/>
            <person name="Shakes D.C."/>
        </authorList>
    </citation>
    <scope>FUNCTION</scope>
</reference>
<reference evidence="7" key="3">
    <citation type="journal article" date="2002" name="Dev. Cell">
        <title>The anaphase-promoting complex and separin are required for embryonic anterior-posterior axis formation.</title>
        <authorList>
            <person name="Rappleye C.A."/>
            <person name="Tagawa A."/>
            <person name="Lyczak R."/>
            <person name="Bowerman B."/>
            <person name="Aroian R.V."/>
        </authorList>
    </citation>
    <scope>FUNCTION</scope>
</reference>
<reference evidence="7" key="4">
    <citation type="journal article" date="2002" name="Genetics">
        <title>Multiple subunits of the Caenorhabditis elegans anaphase-promoting complex are required for chromosome segregation during meiosis I.</title>
        <authorList>
            <person name="Davis E.S."/>
            <person name="Wille L."/>
            <person name="Chestnut B.A."/>
            <person name="Sadler P.L."/>
            <person name="Shakes D.C."/>
            <person name="Golden A."/>
        </authorList>
    </citation>
    <scope>FUNCTION</scope>
    <scope>DISRUPTION PHENOTYPE</scope>
    <scope>MUTAGENESIS OF GLY-333; LEU-411; SER-828; PHE-975; MET-1196; ALA-1197 AND ARG-1297</scope>
</reference>
<reference evidence="7" key="5">
    <citation type="journal article" date="2004" name="Curr. Biol.">
        <title>The anaphase-promoting complex regulates the abundance of GLR-1 glutamate receptors in the ventral nerve cord of C. elegans.</title>
        <authorList>
            <person name="Juo P."/>
            <person name="Kaplan J.M."/>
        </authorList>
    </citation>
    <scope>FUNCTION</scope>
</reference>
<reference evidence="7" key="6">
    <citation type="journal article" date="2014" name="Mol. Cell. Neurosci.">
        <title>The anaphase-promoting complex (APC) ubiquitin ligase regulates GABA transmission at the C. elegans neuromuscular junction.</title>
        <authorList>
            <person name="Kowalski J.R."/>
            <person name="Dube H."/>
            <person name="Touroutine D."/>
            <person name="Rush K.M."/>
            <person name="Goodwin P.R."/>
            <person name="Carozza M."/>
            <person name="Didier Z."/>
            <person name="Francis M.M."/>
            <person name="Juo P."/>
        </authorList>
    </citation>
    <scope>FUNCTION</scope>
</reference>
<feature type="chain" id="PRO_0000435327" description="Anaphase-promoting complex subunit 1" evidence="7">
    <location>
        <begin position="1"/>
        <end position="1505"/>
    </location>
</feature>
<feature type="mutagenesis site" description="In ax102; results in sterility." evidence="4">
    <original>G</original>
    <variation>R</variation>
    <location>
        <position position="333"/>
    </location>
</feature>
<feature type="mutagenesis site" description="In ax143 and or224; results in sterility." evidence="4">
    <original>L</original>
    <variation>F</variation>
    <location>
        <position position="411"/>
    </location>
</feature>
<feature type="mutagenesis site" description="In ax102; results in sterility." evidence="4">
    <original>S</original>
    <variation>F</variation>
    <location>
        <position position="828"/>
    </location>
</feature>
<feature type="mutagenesis site" description="In ar104; results in sterility." evidence="4">
    <original>F</original>
    <variation>L</variation>
    <location>
        <position position="975"/>
    </location>
</feature>
<feature type="mutagenesis site" description="In ax76; maternal-effect lethal." evidence="4">
    <original>M</original>
    <variation>K</variation>
    <location>
        <position position="1196"/>
    </location>
</feature>
<feature type="mutagenesis site" description="In or170; maternal-effect lethal." evidence="4">
    <original>A</original>
    <variation>V</variation>
    <location>
        <position position="1197"/>
    </location>
</feature>
<feature type="mutagenesis site" description="In ax78; maternal-effect lethal." evidence="4">
    <original>R</original>
    <variation>K</variation>
    <location>
        <position position="1297"/>
    </location>
</feature>
<gene>
    <name evidence="9" type="primary">mat-2</name>
    <name evidence="9" type="synonym">apc-1</name>
    <name evidence="9" type="synonym">evl-22</name>
    <name evidence="9" type="synonym">pod-3</name>
    <name evidence="9" type="ORF">W10C6.1</name>
</gene>
<comment type="function">
    <text evidence="2 3 4 5 6">Probable component of the anaphase promoting complex/cyclosome (APC/C), a cell cycle-regulated E3 ubiquitin ligase that controls progression through mitosis and the G1 phase of the cell cycle (PubMed:11861581). The APC/C complex acts by mediating ubiquitination and subsequent degradation of target proteins (PubMed:11861581). Developmental role in early embryogenesis and the metaphase to anaphase transition in oocyte and spermatocyte meiosis and mitosis in germ cells (PubMed:11134076, PubMed:11861581). Required for embryonic anterior-posterior axis formation (PubMed:11832245). Plays a role in regulating the abundance of glr-1 receptors in postmitotic neurons, which may in turn control animal locomotion (PubMed:15556870). Involved in regulating GABA neurotransmitter release at neuromuscular junctions in GABA motor neurons (PubMed:24321454).</text>
</comment>
<comment type="pathway">
    <text evidence="7">Protein modification; protein ubiquitination.</text>
</comment>
<comment type="subunit">
    <text evidence="7">The APC/C complex is probably composed of at least 12 subunits: apc-2, apc-10, apc-11, cdc-26, emb-1, emb-27, emb-30, mat-1, mat-2, mat-3, such-1 and gfi-3.</text>
</comment>
<comment type="disruption phenotype">
    <text evidence="4">RNAi-mediated knockdown results in defective metaphase to anaphase transition (Mat phenotype) and embryos that arrest at the one-cell stage.</text>
</comment>
<comment type="similarity">
    <text evidence="7">Belongs to the APC1 family.</text>
</comment>
<dbReference type="EMBL" id="Z99269">
    <property type="protein sequence ID" value="CAB16467.2"/>
    <property type="molecule type" value="Genomic_DNA"/>
</dbReference>
<dbReference type="RefSeq" id="NP_496383.2">
    <property type="nucleotide sequence ID" value="NM_063982.3"/>
</dbReference>
<dbReference type="SMR" id="O18191"/>
<dbReference type="ComplexPortal" id="CPX-3382">
    <property type="entry name" value="Anaphase-promoting complex"/>
</dbReference>
<dbReference type="DIP" id="DIP-27230N"/>
<dbReference type="FunCoup" id="O18191">
    <property type="interactions" value="95"/>
</dbReference>
<dbReference type="IntAct" id="O18191">
    <property type="interactions" value="3"/>
</dbReference>
<dbReference type="STRING" id="6239.W10C6.1.1"/>
<dbReference type="PaxDb" id="6239-W10C6.1"/>
<dbReference type="PeptideAtlas" id="O18191"/>
<dbReference type="EnsemblMetazoa" id="W10C6.1.1">
    <property type="protein sequence ID" value="W10C6.1.1"/>
    <property type="gene ID" value="WBGene00003133"/>
</dbReference>
<dbReference type="GeneID" id="174698"/>
<dbReference type="KEGG" id="cel:CELE_W10C6.1"/>
<dbReference type="CTD" id="174698"/>
<dbReference type="WormBase" id="W10C6.1">
    <property type="protein sequence ID" value="CE43328"/>
    <property type="gene ID" value="WBGene00003133"/>
    <property type="gene designation" value="mat-2"/>
</dbReference>
<dbReference type="eggNOG" id="KOG1858">
    <property type="taxonomic scope" value="Eukaryota"/>
</dbReference>
<dbReference type="GeneTree" id="ENSGT00390000016757"/>
<dbReference type="HOGENOM" id="CLU_248475_0_0_1"/>
<dbReference type="InParanoid" id="O18191"/>
<dbReference type="OMA" id="DNEWIVM"/>
<dbReference type="OrthoDB" id="26401at2759"/>
<dbReference type="PhylomeDB" id="O18191"/>
<dbReference type="Reactome" id="R-CEL-983168">
    <property type="pathway name" value="Antigen processing: Ubiquitination &amp; Proteasome degradation"/>
</dbReference>
<dbReference type="UniPathway" id="UPA00143"/>
<dbReference type="PRO" id="PR:O18191"/>
<dbReference type="Proteomes" id="UP000001940">
    <property type="component" value="Chromosome II"/>
</dbReference>
<dbReference type="Bgee" id="WBGene00003133">
    <property type="expression patterns" value="Expressed in germ line (C elegans) and 4 other cell types or tissues"/>
</dbReference>
<dbReference type="GO" id="GO:0005680">
    <property type="term" value="C:anaphase-promoting complex"/>
    <property type="evidence" value="ECO:0000315"/>
    <property type="project" value="WormBase"/>
</dbReference>
<dbReference type="GO" id="GO:0060090">
    <property type="term" value="F:molecular adaptor activity"/>
    <property type="evidence" value="ECO:0000318"/>
    <property type="project" value="GO_Central"/>
</dbReference>
<dbReference type="GO" id="GO:0031145">
    <property type="term" value="P:anaphase-promoting complex-dependent catabolic process"/>
    <property type="evidence" value="ECO:0000318"/>
    <property type="project" value="GO_Central"/>
</dbReference>
<dbReference type="GO" id="GO:0008356">
    <property type="term" value="P:asymmetric cell division"/>
    <property type="evidence" value="ECO:0000315"/>
    <property type="project" value="UniProtKB"/>
</dbReference>
<dbReference type="GO" id="GO:0051295">
    <property type="term" value="P:establishment of meiotic spindle localization"/>
    <property type="evidence" value="ECO:0000316"/>
    <property type="project" value="WormBase"/>
</dbReference>
<dbReference type="GO" id="GO:0044785">
    <property type="term" value="P:metaphase/anaphase transition of meiotic cell cycle"/>
    <property type="evidence" value="ECO:0000315"/>
    <property type="project" value="WormBase"/>
</dbReference>
<dbReference type="GO" id="GO:0007091">
    <property type="term" value="P:metaphase/anaphase transition of mitotic cell cycle"/>
    <property type="evidence" value="ECO:0000315"/>
    <property type="project" value="WormBase"/>
</dbReference>
<dbReference type="GO" id="GO:0006836">
    <property type="term" value="P:neurotransmitter transport"/>
    <property type="evidence" value="ECO:0007669"/>
    <property type="project" value="UniProtKB-KW"/>
</dbReference>
<dbReference type="GO" id="GO:0009949">
    <property type="term" value="P:polarity specification of anterior/posterior axis"/>
    <property type="evidence" value="ECO:0000315"/>
    <property type="project" value="WormBase"/>
</dbReference>
<dbReference type="GO" id="GO:0070979">
    <property type="term" value="P:protein K11-linked ubiquitination"/>
    <property type="evidence" value="ECO:0000318"/>
    <property type="project" value="GO_Central"/>
</dbReference>
<dbReference type="GO" id="GO:0051445">
    <property type="term" value="P:regulation of meiotic cell cycle"/>
    <property type="evidence" value="ECO:0000303"/>
    <property type="project" value="ComplexPortal"/>
</dbReference>
<dbReference type="GO" id="GO:0007346">
    <property type="term" value="P:regulation of mitotic cell cycle"/>
    <property type="evidence" value="ECO:0000303"/>
    <property type="project" value="ComplexPortal"/>
</dbReference>
<dbReference type="FunFam" id="1.25.10.10:FF:001015">
    <property type="entry name" value="Anaphase-promoting complex subunit 1"/>
    <property type="match status" value="1"/>
</dbReference>
<dbReference type="Gene3D" id="1.25.10.10">
    <property type="entry name" value="Leucine-rich Repeat Variant"/>
    <property type="match status" value="1"/>
</dbReference>
<dbReference type="InterPro" id="IPR024990">
    <property type="entry name" value="Apc1"/>
</dbReference>
<dbReference type="InterPro" id="IPR011989">
    <property type="entry name" value="ARM-like"/>
</dbReference>
<dbReference type="PANTHER" id="PTHR12827:SF3">
    <property type="entry name" value="ANAPHASE-PROMOTING COMPLEX SUBUNIT 1"/>
    <property type="match status" value="1"/>
</dbReference>
<dbReference type="PANTHER" id="PTHR12827">
    <property type="entry name" value="MEIOTIC CHECKPOINT REGULATOR TSG24 FAMILY MEMBER"/>
    <property type="match status" value="1"/>
</dbReference>
<sequence>MRKYVLFFISGNNDSQIWATTPNTPRVIARGGLERNIHTRTLARMVNEDAPGTSTPAAQSRLQTTASPFHRTHLTQMCRRGDTNASLLRDFTRMIRDTPRNFSKNTQHGNDRDFGDLERDPDVDLLLSKVCLECVYVEPKEGAIPKANKIFISNFLSDMYINLVSVTGEVMKIIPIWKNAETTRKNLLEKGKHEPCVVDCVDAAFVMKSGITVVLGSDFTTAMFGGNERIAPIFIKEMSNQRVGRKFRLFSFAENRIFAVNEMRCIVVEIPETVTCKSATELMRTCFLHLDRDLSRKLLIKWRSVKRDVDTERLDLDRKEMIDVAIFMLDNVGVRVTNVVAQERADSPEGHGGKQMRPRMSDSEVLSMMRQFFEEMTFRPKSEVITEDGYKCHLSVELDPNGEGFVHTQDLLHAFHSQCEDWSINTMMHSILLELIPYAYLLAKVMNYRAFEEYYVQLFKHLLSQIAIEFKIPPEIHEKFVGAIHIPKPCWSLNNVIAHIICERTTPETMESIPKFISKSSVRLLTILAVGRKFIGMGTNIDMDCERWLGKDWKRRIGLSGDILKSFRRIMNGKSSNSAGRASQLIELFEIGSITIDFMVLAVKVLMLKFQTDAFAGAQSIEPKKCIYATADEMISIAHLRWKNDIRMHNVQLMLNSSRPILIATNILRKNEDDNMKELQDRFLTQTSYRTFSQPFGRAFLDFRTAVPSLLTSIYIPRLNVGGMIYPSRVTCDPPTTEIFKLCTEWGNFYNSLASALRIGSSETVRIDNEWIVMVSKNIKSTAVIGGMTLGFGLNGHLAPFNMYHAHQMLSTFDKFHSVALLIGLSASNFTTCDVQIHKILATYLSFLMGPTPLEIKLDFTIQTAAISGLGLLFADSGNMTIAKKLVNEIGRAPNRDEEPVTDRNAYKLSAGFSLGLIMLGKGNGSASTVIPFKQNIPPMSQRLIYMMNGMRRDKCVFLPQVAPPVVNDVPNLPFSNGGMMTSSQVANHVKESEYINIHQSAEPAAIALGMMFMKMNNEFIANALALPGTITELERLKPDSMYSRVLAQCLVMWDSIEPTHDFVKSLIPPVIREYATAALHFGVPIRRDEDGEEVHEAINDAEEKYWAEIVDKGTVSQTFLYAVSAACMAIALKFSSCGGPNEKNIVNTAFRIIEYYTKIVMPDGKSNKDMGSIRMCIYSGAYTRTSCLSMLITAMAILRVGTGDLEVMRYARLLRLCDKPESDWIATGKKHFEQMVAHQALGILMLGEGRYAFKKDDLSIALTIISTFPTIPQSVSDNSHYHQPLRFLWSMAVEPRLLVPFDIAESCVVEVDVTIVMKPKDGNEPIVYKEKAPYLLPPLEDLQSISIGGGNYQLVHISLQSEDQVKVMKDIMTIGQGRVMLKRYGVDSSEMKIKEATTLYDDTPSLMSMFNNEDTAVELDEYEIQCMMEKIDEGINLNSSDEYPNVQIELSCVRDVTERTTMDLAQLQKRSLKLLSESLDLWQDEVNVSNTINGLADAVQDMQI</sequence>